<comment type="function">
    <text evidence="2">As part of the augmin complex, plays a role in centrosome-independent generation of spindle microtubules. The complex is required for mitotic spindle assembly through its involvement in localizing gamma-tubulin to spindle microtubules. msd1 is required for microtubule nucleation from within the mitotic spindle and for localization of Grip71 to centrosomes and mitotic spindle.</text>
</comment>
<comment type="subunit">
    <text evidence="1 2">Component of the augmin complex composed of dgt2, dgt3, dgt4, dgt5, dgt6, msd1, msd5 and wac (PubMed:19369198, PubMed:19684111). The complex interacts directly or indirectly with microtubules and is required for centrosome-independent generation of spindle microtubules (PubMed:19684111).</text>
</comment>
<comment type="interaction">
    <interactant intactId="EBI-15769774">
        <id>Q9W0G7</id>
    </interactant>
    <interactant intactId="EBI-186540">
        <id>Q9VAP2</id>
        <label>dgt6</label>
    </interactant>
    <organismsDiffer>false</organismsDiffer>
    <experiments>2</experiments>
</comment>
<comment type="subcellular location">
    <subcellularLocation>
        <location evidence="1">Cytoplasm</location>
        <location evidence="1">Cytoskeleton</location>
        <location evidence="1">Spindle</location>
    </subcellularLocation>
</comment>
<comment type="disruption phenotype">
    <text evidence="2">Viable but females are sterile. Mutant embryos show increased mitotic spindle length during metaphase and reduced mitotic spindle density.</text>
</comment>
<evidence type="ECO:0000269" key="1">
    <source>
    </source>
</evidence>
<evidence type="ECO:0000269" key="2">
    <source>
    </source>
</evidence>
<evidence type="ECO:0000303" key="3">
    <source>
    </source>
</evidence>
<evidence type="ECO:0000303" key="4">
    <source>
    </source>
</evidence>
<evidence type="ECO:0000305" key="5"/>
<evidence type="ECO:0000312" key="6">
    <source>
        <dbReference type="EMBL" id="AAS15650.1"/>
    </source>
</evidence>
<evidence type="ECO:0000312" key="7">
    <source>
        <dbReference type="EMBL" id="ANY27402.1"/>
    </source>
</evidence>
<evidence type="ECO:0000312" key="8">
    <source>
        <dbReference type="FlyBase" id="FBgn0035209"/>
    </source>
</evidence>
<evidence type="ECO:0000312" key="9">
    <source>
        <dbReference type="Proteomes" id="UP000000803"/>
    </source>
</evidence>
<protein>
    <recommendedName>
        <fullName evidence="5">Augmin complex subunit msd1</fullName>
    </recommendedName>
    <alternativeName>
        <fullName evidence="4">Mitotic spindle density protein 1</fullName>
    </alternativeName>
</protein>
<feature type="chain" id="PRO_0000438656" description="Augmin complex subunit msd1" evidence="5">
    <location>
        <begin position="1"/>
        <end position="138"/>
    </location>
</feature>
<dbReference type="EMBL" id="AE014296">
    <property type="protein sequence ID" value="AAF47481.2"/>
    <property type="molecule type" value="Genomic_DNA"/>
</dbReference>
<dbReference type="EMBL" id="BT011514">
    <property type="protein sequence ID" value="AAS15650.1"/>
    <property type="molecule type" value="mRNA"/>
</dbReference>
<dbReference type="EMBL" id="KX531592">
    <property type="protein sequence ID" value="ANY27402.1"/>
    <property type="molecule type" value="mRNA"/>
</dbReference>
<dbReference type="RefSeq" id="NP_612100.2">
    <property type="nucleotide sequence ID" value="NM_138256.4"/>
</dbReference>
<dbReference type="SMR" id="Q9W0G7"/>
<dbReference type="ComplexPortal" id="CPX-9861">
    <property type="entry name" value="Augmin complex"/>
</dbReference>
<dbReference type="DIP" id="DIP-48828N"/>
<dbReference type="FunCoup" id="Q9W0G7">
    <property type="interactions" value="35"/>
</dbReference>
<dbReference type="IntAct" id="Q9W0G7">
    <property type="interactions" value="13"/>
</dbReference>
<dbReference type="STRING" id="7227.FBpp0072571"/>
<dbReference type="PaxDb" id="7227-FBpp0072571"/>
<dbReference type="DNASU" id="38155"/>
<dbReference type="EnsemblMetazoa" id="FBtr0072678">
    <property type="protein sequence ID" value="FBpp0072571"/>
    <property type="gene ID" value="FBgn0035209"/>
</dbReference>
<dbReference type="GeneID" id="38155"/>
<dbReference type="KEGG" id="dme:Dmel_CG13914"/>
<dbReference type="UCSC" id="CG13914-RA">
    <property type="organism name" value="d. melanogaster"/>
</dbReference>
<dbReference type="AGR" id="FB:FBgn0035209"/>
<dbReference type="CTD" id="38155"/>
<dbReference type="FlyBase" id="FBgn0035209">
    <property type="gene designation" value="msd1"/>
</dbReference>
<dbReference type="VEuPathDB" id="VectorBase:FBgn0035209"/>
<dbReference type="eggNOG" id="ENOG502TC0W">
    <property type="taxonomic scope" value="Eukaryota"/>
</dbReference>
<dbReference type="HOGENOM" id="CLU_1857347_0_0_1"/>
<dbReference type="InParanoid" id="Q9W0G7"/>
<dbReference type="OMA" id="YRHRVEH"/>
<dbReference type="OrthoDB" id="8005241at2759"/>
<dbReference type="PhylomeDB" id="Q9W0G7"/>
<dbReference type="BioGRID-ORCS" id="38155">
    <property type="hits" value="0 hits in 1 CRISPR screen"/>
</dbReference>
<dbReference type="CD-CODE" id="2838EF58">
    <property type="entry name" value="Centrosome"/>
</dbReference>
<dbReference type="GenomeRNAi" id="38155"/>
<dbReference type="PRO" id="PR:Q9W0G7"/>
<dbReference type="Proteomes" id="UP000000803">
    <property type="component" value="Chromosome 3L"/>
</dbReference>
<dbReference type="Bgee" id="FBgn0035209">
    <property type="expression patterns" value="Expressed in spermatocyte in testis and 38 other cell types or tissues"/>
</dbReference>
<dbReference type="GO" id="GO:0005737">
    <property type="term" value="C:cytoplasm"/>
    <property type="evidence" value="ECO:0007669"/>
    <property type="project" value="UniProtKB-KW"/>
</dbReference>
<dbReference type="GO" id="GO:0070652">
    <property type="term" value="C:HAUS complex"/>
    <property type="evidence" value="ECO:0000314"/>
    <property type="project" value="FlyBase"/>
</dbReference>
<dbReference type="GO" id="GO:0005874">
    <property type="term" value="C:microtubule"/>
    <property type="evidence" value="ECO:0007669"/>
    <property type="project" value="UniProtKB-KW"/>
</dbReference>
<dbReference type="GO" id="GO:0005819">
    <property type="term" value="C:spindle"/>
    <property type="evidence" value="ECO:0007669"/>
    <property type="project" value="UniProtKB-SubCell"/>
</dbReference>
<dbReference type="GO" id="GO:0051301">
    <property type="term" value="P:cell division"/>
    <property type="evidence" value="ECO:0007669"/>
    <property type="project" value="UniProtKB-KW"/>
</dbReference>
<dbReference type="GO" id="GO:0007020">
    <property type="term" value="P:microtubule nucleation"/>
    <property type="evidence" value="ECO:0000314"/>
    <property type="project" value="FlyBase"/>
</dbReference>
<dbReference type="GO" id="GO:0090307">
    <property type="term" value="P:mitotic spindle assembly"/>
    <property type="evidence" value="ECO:0000305"/>
    <property type="project" value="FlyBase"/>
</dbReference>
<dbReference type="GO" id="GO:0090221">
    <property type="term" value="P:mitotic spindle-templated microtubule nucleation"/>
    <property type="evidence" value="ECO:0000314"/>
    <property type="project" value="FlyBase"/>
</dbReference>
<proteinExistence type="evidence at protein level"/>
<keyword id="KW-0131">Cell cycle</keyword>
<keyword id="KW-0132">Cell division</keyword>
<keyword id="KW-0963">Cytoplasm</keyword>
<keyword id="KW-0206">Cytoskeleton</keyword>
<keyword id="KW-0493">Microtubule</keyword>
<keyword id="KW-0498">Mitosis</keyword>
<keyword id="KW-1185">Reference proteome</keyword>
<name>MSD1_DROME</name>
<organism evidence="9">
    <name type="scientific">Drosophila melanogaster</name>
    <name type="common">Fruit fly</name>
    <dbReference type="NCBI Taxonomy" id="7227"/>
    <lineage>
        <taxon>Eukaryota</taxon>
        <taxon>Metazoa</taxon>
        <taxon>Ecdysozoa</taxon>
        <taxon>Arthropoda</taxon>
        <taxon>Hexapoda</taxon>
        <taxon>Insecta</taxon>
        <taxon>Pterygota</taxon>
        <taxon>Neoptera</taxon>
        <taxon>Endopterygota</taxon>
        <taxon>Diptera</taxon>
        <taxon>Brachycera</taxon>
        <taxon>Muscomorpha</taxon>
        <taxon>Ephydroidea</taxon>
        <taxon>Drosophilidae</taxon>
        <taxon>Drosophila</taxon>
        <taxon>Sophophora</taxon>
    </lineage>
</organism>
<sequence length="138" mass="15669">MSDAVDKMLAGMAANRQTMNRQLAKIDEIMERSNNTLLHIESNSKAFSQNVALSETQKMYNLRPEAEMTLSKILENFKLLMSSSDQREETYSALEGCLAYRHRVEHLGSSVRKLVALYDTVGQMKNSQEEQYASEDSP</sequence>
<gene>
    <name evidence="4 8" type="primary">msd1</name>
    <name evidence="3" type="synonym">dgt9</name>
    <name evidence="8" type="ORF">CG13914</name>
</gene>
<accession>Q9W0G7</accession>
<accession>Q6NMY7</accession>
<reference evidence="9" key="1">
    <citation type="journal article" date="2000" name="Science">
        <title>The genome sequence of Drosophila melanogaster.</title>
        <authorList>
            <person name="Adams M.D."/>
            <person name="Celniker S.E."/>
            <person name="Holt R.A."/>
            <person name="Evans C.A."/>
            <person name="Gocayne J.D."/>
            <person name="Amanatides P.G."/>
            <person name="Scherer S.E."/>
            <person name="Li P.W."/>
            <person name="Hoskins R.A."/>
            <person name="Galle R.F."/>
            <person name="George R.A."/>
            <person name="Lewis S.E."/>
            <person name="Richards S."/>
            <person name="Ashburner M."/>
            <person name="Henderson S.N."/>
            <person name="Sutton G.G."/>
            <person name="Wortman J.R."/>
            <person name="Yandell M.D."/>
            <person name="Zhang Q."/>
            <person name="Chen L.X."/>
            <person name="Brandon R.C."/>
            <person name="Rogers Y.-H.C."/>
            <person name="Blazej R.G."/>
            <person name="Champe M."/>
            <person name="Pfeiffer B.D."/>
            <person name="Wan K.H."/>
            <person name="Doyle C."/>
            <person name="Baxter E.G."/>
            <person name="Helt G."/>
            <person name="Nelson C.R."/>
            <person name="Miklos G.L.G."/>
            <person name="Abril J.F."/>
            <person name="Agbayani A."/>
            <person name="An H.-J."/>
            <person name="Andrews-Pfannkoch C."/>
            <person name="Baldwin D."/>
            <person name="Ballew R.M."/>
            <person name="Basu A."/>
            <person name="Baxendale J."/>
            <person name="Bayraktaroglu L."/>
            <person name="Beasley E.M."/>
            <person name="Beeson K.Y."/>
            <person name="Benos P.V."/>
            <person name="Berman B.P."/>
            <person name="Bhandari D."/>
            <person name="Bolshakov S."/>
            <person name="Borkova D."/>
            <person name="Botchan M.R."/>
            <person name="Bouck J."/>
            <person name="Brokstein P."/>
            <person name="Brottier P."/>
            <person name="Burtis K.C."/>
            <person name="Busam D.A."/>
            <person name="Butler H."/>
            <person name="Cadieu E."/>
            <person name="Center A."/>
            <person name="Chandra I."/>
            <person name="Cherry J.M."/>
            <person name="Cawley S."/>
            <person name="Dahlke C."/>
            <person name="Davenport L.B."/>
            <person name="Davies P."/>
            <person name="de Pablos B."/>
            <person name="Delcher A."/>
            <person name="Deng Z."/>
            <person name="Mays A.D."/>
            <person name="Dew I."/>
            <person name="Dietz S.M."/>
            <person name="Dodson K."/>
            <person name="Doup L.E."/>
            <person name="Downes M."/>
            <person name="Dugan-Rocha S."/>
            <person name="Dunkov B.C."/>
            <person name="Dunn P."/>
            <person name="Durbin K.J."/>
            <person name="Evangelista C.C."/>
            <person name="Ferraz C."/>
            <person name="Ferriera S."/>
            <person name="Fleischmann W."/>
            <person name="Fosler C."/>
            <person name="Gabrielian A.E."/>
            <person name="Garg N.S."/>
            <person name="Gelbart W.M."/>
            <person name="Glasser K."/>
            <person name="Glodek A."/>
            <person name="Gong F."/>
            <person name="Gorrell J.H."/>
            <person name="Gu Z."/>
            <person name="Guan P."/>
            <person name="Harris M."/>
            <person name="Harris N.L."/>
            <person name="Harvey D.A."/>
            <person name="Heiman T.J."/>
            <person name="Hernandez J.R."/>
            <person name="Houck J."/>
            <person name="Hostin D."/>
            <person name="Houston K.A."/>
            <person name="Howland T.J."/>
            <person name="Wei M.-H."/>
            <person name="Ibegwam C."/>
            <person name="Jalali M."/>
            <person name="Kalush F."/>
            <person name="Karpen G.H."/>
            <person name="Ke Z."/>
            <person name="Kennison J.A."/>
            <person name="Ketchum K.A."/>
            <person name="Kimmel B.E."/>
            <person name="Kodira C.D."/>
            <person name="Kraft C.L."/>
            <person name="Kravitz S."/>
            <person name="Kulp D."/>
            <person name="Lai Z."/>
            <person name="Lasko P."/>
            <person name="Lei Y."/>
            <person name="Levitsky A.A."/>
            <person name="Li J.H."/>
            <person name="Li Z."/>
            <person name="Liang Y."/>
            <person name="Lin X."/>
            <person name="Liu X."/>
            <person name="Mattei B."/>
            <person name="McIntosh T.C."/>
            <person name="McLeod M.P."/>
            <person name="McPherson D."/>
            <person name="Merkulov G."/>
            <person name="Milshina N.V."/>
            <person name="Mobarry C."/>
            <person name="Morris J."/>
            <person name="Moshrefi A."/>
            <person name="Mount S.M."/>
            <person name="Moy M."/>
            <person name="Murphy B."/>
            <person name="Murphy L."/>
            <person name="Muzny D.M."/>
            <person name="Nelson D.L."/>
            <person name="Nelson D.R."/>
            <person name="Nelson K.A."/>
            <person name="Nixon K."/>
            <person name="Nusskern D.R."/>
            <person name="Pacleb J.M."/>
            <person name="Palazzolo M."/>
            <person name="Pittman G.S."/>
            <person name="Pan S."/>
            <person name="Pollard J."/>
            <person name="Puri V."/>
            <person name="Reese M.G."/>
            <person name="Reinert K."/>
            <person name="Remington K."/>
            <person name="Saunders R.D.C."/>
            <person name="Scheeler F."/>
            <person name="Shen H."/>
            <person name="Shue B.C."/>
            <person name="Siden-Kiamos I."/>
            <person name="Simpson M."/>
            <person name="Skupski M.P."/>
            <person name="Smith T.J."/>
            <person name="Spier E."/>
            <person name="Spradling A.C."/>
            <person name="Stapleton M."/>
            <person name="Strong R."/>
            <person name="Sun E."/>
            <person name="Svirskas R."/>
            <person name="Tector C."/>
            <person name="Turner R."/>
            <person name="Venter E."/>
            <person name="Wang A.H."/>
            <person name="Wang X."/>
            <person name="Wang Z.-Y."/>
            <person name="Wassarman D.A."/>
            <person name="Weinstock G.M."/>
            <person name="Weissenbach J."/>
            <person name="Williams S.M."/>
            <person name="Woodage T."/>
            <person name="Worley K.C."/>
            <person name="Wu D."/>
            <person name="Yang S."/>
            <person name="Yao Q.A."/>
            <person name="Ye J."/>
            <person name="Yeh R.-F."/>
            <person name="Zaveri J.S."/>
            <person name="Zhan M."/>
            <person name="Zhang G."/>
            <person name="Zhao Q."/>
            <person name="Zheng L."/>
            <person name="Zheng X.H."/>
            <person name="Zhong F.N."/>
            <person name="Zhong W."/>
            <person name="Zhou X."/>
            <person name="Zhu S.C."/>
            <person name="Zhu X."/>
            <person name="Smith H.O."/>
            <person name="Gibbs R.A."/>
            <person name="Myers E.W."/>
            <person name="Rubin G.M."/>
            <person name="Venter J.C."/>
        </authorList>
    </citation>
    <scope>NUCLEOTIDE SEQUENCE [LARGE SCALE GENOMIC DNA]</scope>
    <source>
        <strain evidence="9">Berkeley</strain>
    </source>
</reference>
<reference evidence="9" key="2">
    <citation type="journal article" date="2002" name="Genome Biol.">
        <title>Annotation of the Drosophila melanogaster euchromatic genome: a systematic review.</title>
        <authorList>
            <person name="Misra S."/>
            <person name="Crosby M.A."/>
            <person name="Mungall C.J."/>
            <person name="Matthews B.B."/>
            <person name="Campbell K.S."/>
            <person name="Hradecky P."/>
            <person name="Huang Y."/>
            <person name="Kaminker J.S."/>
            <person name="Millburn G.H."/>
            <person name="Prochnik S.E."/>
            <person name="Smith C.D."/>
            <person name="Tupy J.L."/>
            <person name="Whitfield E.J."/>
            <person name="Bayraktaroglu L."/>
            <person name="Berman B.P."/>
            <person name="Bettencourt B.R."/>
            <person name="Celniker S.E."/>
            <person name="de Grey A.D.N.J."/>
            <person name="Drysdale R.A."/>
            <person name="Harris N.L."/>
            <person name="Richter J."/>
            <person name="Russo S."/>
            <person name="Schroeder A.J."/>
            <person name="Shu S.Q."/>
            <person name="Stapleton M."/>
            <person name="Yamada C."/>
            <person name="Ashburner M."/>
            <person name="Gelbart W.M."/>
            <person name="Rubin G.M."/>
            <person name="Lewis S.E."/>
        </authorList>
    </citation>
    <scope>GENOME REANNOTATION</scope>
    <source>
        <strain evidence="9">Berkeley</strain>
    </source>
</reference>
<reference evidence="6" key="3">
    <citation type="submission" date="2004-02" db="EMBL/GenBank/DDBJ databases">
        <authorList>
            <person name="Stapleton M."/>
            <person name="Carlson J."/>
            <person name="Chavez C."/>
            <person name="Frise E."/>
            <person name="George R."/>
            <person name="Pacleb J."/>
            <person name="Park S."/>
            <person name="Wan K."/>
            <person name="Yu C."/>
            <person name="Rubin G.M."/>
            <person name="Celniker S."/>
        </authorList>
    </citation>
    <scope>NUCLEOTIDE SEQUENCE [LARGE SCALE MRNA]</scope>
    <source>
        <strain evidence="6">Berkeley</strain>
    </source>
</reference>
<reference evidence="7" key="4">
    <citation type="submission" date="2016-07" db="EMBL/GenBank/DDBJ databases">
        <authorList>
            <person name="Florea S."/>
            <person name="Webb J.S."/>
            <person name="Jaromczyk J."/>
            <person name="Schardl C.L."/>
        </authorList>
    </citation>
    <scope>NUCLEOTIDE SEQUENCE [LARGE SCALE MRNA]</scope>
    <source>
        <strain evidence="7">Berkeley</strain>
    </source>
</reference>
<reference evidence="5" key="5">
    <citation type="journal article" date="2009" name="Genes Dev.">
        <title>A new Augmin subunit, Msd1, demonstrates the importance of mitotic spindle-templated microtubule nucleation in the absence of functioning centrosomes.</title>
        <authorList>
            <person name="Wainman A."/>
            <person name="Buster D.W."/>
            <person name="Duncan T."/>
            <person name="Metz J."/>
            <person name="Ma A."/>
            <person name="Sharp D."/>
            <person name="Wakefield J.G."/>
        </authorList>
    </citation>
    <scope>FUNCTION</scope>
    <scope>IDENTIFICATION IN AUGMIN COMPLEX</scope>
    <scope>DISRUPTION PHENOTYPE</scope>
</reference>
<reference evidence="5" key="6">
    <citation type="journal article" date="2009" name="Proc. Natl. Acad. Sci. U.S.A.">
        <title>The augmin complex plays a critical role in spindle microtubule generation for mitotic progression and cytokinesis in human cells.</title>
        <authorList>
            <person name="Uehara R."/>
            <person name="Nozawa R.-S."/>
            <person name="Tomioka A."/>
            <person name="Petry S."/>
            <person name="Vale R.D."/>
            <person name="Obuse C."/>
            <person name="Goshima G."/>
        </authorList>
    </citation>
    <scope>IDENTIFICATION IN THE AUGMIN COMPLEX</scope>
    <scope>SUBCELLULAR LOCATION</scope>
    <scope>IDENTIFICATION BY MASS SPECTROMETRY</scope>
</reference>